<dbReference type="EMBL" id="CP001095">
    <property type="protein sequence ID" value="ACJ53291.1"/>
    <property type="molecule type" value="Genomic_DNA"/>
</dbReference>
<dbReference type="EMBL" id="AP010889">
    <property type="protein sequence ID" value="BAJ69882.1"/>
    <property type="molecule type" value="Genomic_DNA"/>
</dbReference>
<dbReference type="RefSeq" id="WP_007053035.1">
    <property type="nucleotide sequence ID" value="NZ_JDTT01000039.1"/>
</dbReference>
<dbReference type="SMR" id="B7GND5"/>
<dbReference type="GeneID" id="69578892"/>
<dbReference type="KEGG" id="bln:Blon_2232"/>
<dbReference type="KEGG" id="blon:BLIJ_2305"/>
<dbReference type="PATRIC" id="fig|391904.8.peg.2307"/>
<dbReference type="HOGENOM" id="CLU_083987_3_3_11"/>
<dbReference type="Proteomes" id="UP000001360">
    <property type="component" value="Chromosome"/>
</dbReference>
<dbReference type="GO" id="GO:0022625">
    <property type="term" value="C:cytosolic large ribosomal subunit"/>
    <property type="evidence" value="ECO:0007669"/>
    <property type="project" value="TreeGrafter"/>
</dbReference>
<dbReference type="GO" id="GO:0019843">
    <property type="term" value="F:rRNA binding"/>
    <property type="evidence" value="ECO:0007669"/>
    <property type="project" value="UniProtKB-UniRule"/>
</dbReference>
<dbReference type="GO" id="GO:0003735">
    <property type="term" value="F:structural constituent of ribosome"/>
    <property type="evidence" value="ECO:0007669"/>
    <property type="project" value="InterPro"/>
</dbReference>
<dbReference type="GO" id="GO:0006412">
    <property type="term" value="P:translation"/>
    <property type="evidence" value="ECO:0007669"/>
    <property type="project" value="UniProtKB-UniRule"/>
</dbReference>
<dbReference type="CDD" id="cd00336">
    <property type="entry name" value="Ribosomal_L22"/>
    <property type="match status" value="1"/>
</dbReference>
<dbReference type="Gene3D" id="3.90.470.10">
    <property type="entry name" value="Ribosomal protein L22/L17"/>
    <property type="match status" value="1"/>
</dbReference>
<dbReference type="HAMAP" id="MF_01331_B">
    <property type="entry name" value="Ribosomal_uL22_B"/>
    <property type="match status" value="1"/>
</dbReference>
<dbReference type="InterPro" id="IPR001063">
    <property type="entry name" value="Ribosomal_uL22"/>
</dbReference>
<dbReference type="InterPro" id="IPR005727">
    <property type="entry name" value="Ribosomal_uL22_bac/chlpt-type"/>
</dbReference>
<dbReference type="InterPro" id="IPR047867">
    <property type="entry name" value="Ribosomal_uL22_bac/org-type"/>
</dbReference>
<dbReference type="InterPro" id="IPR018260">
    <property type="entry name" value="Ribosomal_uL22_CS"/>
</dbReference>
<dbReference type="InterPro" id="IPR036394">
    <property type="entry name" value="Ribosomal_uL22_sf"/>
</dbReference>
<dbReference type="NCBIfam" id="TIGR01044">
    <property type="entry name" value="rplV_bact"/>
    <property type="match status" value="1"/>
</dbReference>
<dbReference type="PANTHER" id="PTHR13501">
    <property type="entry name" value="CHLOROPLAST 50S RIBOSOMAL PROTEIN L22-RELATED"/>
    <property type="match status" value="1"/>
</dbReference>
<dbReference type="PANTHER" id="PTHR13501:SF8">
    <property type="entry name" value="LARGE RIBOSOMAL SUBUNIT PROTEIN UL22M"/>
    <property type="match status" value="1"/>
</dbReference>
<dbReference type="Pfam" id="PF00237">
    <property type="entry name" value="Ribosomal_L22"/>
    <property type="match status" value="1"/>
</dbReference>
<dbReference type="SUPFAM" id="SSF54843">
    <property type="entry name" value="Ribosomal protein L22"/>
    <property type="match status" value="1"/>
</dbReference>
<dbReference type="PROSITE" id="PS00464">
    <property type="entry name" value="RIBOSOMAL_L22"/>
    <property type="match status" value="1"/>
</dbReference>
<gene>
    <name evidence="1" type="primary">rplV</name>
    <name type="ordered locus">Blon_2232</name>
    <name type="ordered locus">BLIJ_2305</name>
</gene>
<feature type="chain" id="PRO_1000166046" description="Large ribosomal subunit protein uL22">
    <location>
        <begin position="1"/>
        <end position="119"/>
    </location>
</feature>
<name>RL22_BIFLS</name>
<evidence type="ECO:0000255" key="1">
    <source>
        <dbReference type="HAMAP-Rule" id="MF_01331"/>
    </source>
</evidence>
<evidence type="ECO:0000305" key="2"/>
<protein>
    <recommendedName>
        <fullName evidence="1">Large ribosomal subunit protein uL22</fullName>
    </recommendedName>
    <alternativeName>
        <fullName evidence="2">50S ribosomal protein L22</fullName>
    </alternativeName>
</protein>
<proteinExistence type="inferred from homology"/>
<reference key="1">
    <citation type="journal article" date="2008" name="Proc. Natl. Acad. Sci. U.S.A.">
        <title>The genome sequence of Bifidobacterium longum subsp. infantis reveals adaptations for milk utilization within the infant microbiome.</title>
        <authorList>
            <person name="Sela D.A."/>
            <person name="Chapman J."/>
            <person name="Adeuya A."/>
            <person name="Kim J.H."/>
            <person name="Chen F."/>
            <person name="Whitehead T.R."/>
            <person name="Lapidus A."/>
            <person name="Rokhsar D.S."/>
            <person name="Lebrilla C.B."/>
            <person name="German J.B."/>
            <person name="Price N.P."/>
            <person name="Richardson P.M."/>
            <person name="Mills D.A."/>
        </authorList>
    </citation>
    <scope>NUCLEOTIDE SEQUENCE [LARGE SCALE GENOMIC DNA]</scope>
    <source>
        <strain>ATCC 15697 / DSM 20088 / JCM 1222 / NCTC 11817 / S12</strain>
    </source>
</reference>
<reference key="2">
    <citation type="journal article" date="2011" name="Nature">
        <title>Bifidobacteria can protect from enteropathogenic infection through production of acetate.</title>
        <authorList>
            <person name="Fukuda S."/>
            <person name="Toh H."/>
            <person name="Hase K."/>
            <person name="Oshima K."/>
            <person name="Nakanishi Y."/>
            <person name="Yoshimura K."/>
            <person name="Tobe T."/>
            <person name="Clarke J.M."/>
            <person name="Topping D.L."/>
            <person name="Suzuki T."/>
            <person name="Taylor T.D."/>
            <person name="Itoh K."/>
            <person name="Kikuchi J."/>
            <person name="Morita H."/>
            <person name="Hattori M."/>
            <person name="Ohno H."/>
        </authorList>
    </citation>
    <scope>NUCLEOTIDE SEQUENCE [LARGE SCALE GENOMIC DNA]</scope>
    <source>
        <strain>ATCC 15697 / DSM 20088 / JCM 1222 / NCTC 11817 / S12</strain>
    </source>
</reference>
<accession>B7GND5</accession>
<accession>E8MN79</accession>
<organism>
    <name type="scientific">Bifidobacterium longum subsp. infantis (strain ATCC 15697 / DSM 20088 / JCM 1222 / NCTC 11817 / S12)</name>
    <dbReference type="NCBI Taxonomy" id="391904"/>
    <lineage>
        <taxon>Bacteria</taxon>
        <taxon>Bacillati</taxon>
        <taxon>Actinomycetota</taxon>
        <taxon>Actinomycetes</taxon>
        <taxon>Bifidobacteriales</taxon>
        <taxon>Bifidobacteriaceae</taxon>
        <taxon>Bifidobacterium</taxon>
    </lineage>
</organism>
<keyword id="KW-0687">Ribonucleoprotein</keyword>
<keyword id="KW-0689">Ribosomal protein</keyword>
<keyword id="KW-0694">RNA-binding</keyword>
<keyword id="KW-0699">rRNA-binding</keyword>
<sequence>MEAKAIARHVRVTPRKARRMVDLIRGKKATEAVTILKFAPQAAALPVRKTLESAIANARVKADKAGEPFRENDLYIKETYVDEGVTLKRFRARAQGRAARINKRTSHITVVVANKEGAR</sequence>
<comment type="function">
    <text evidence="1">This protein binds specifically to 23S rRNA; its binding is stimulated by other ribosomal proteins, e.g. L4, L17, and L20. It is important during the early stages of 50S assembly. It makes multiple contacts with different domains of the 23S rRNA in the assembled 50S subunit and ribosome (By similarity).</text>
</comment>
<comment type="function">
    <text evidence="1">The globular domain of the protein is located near the polypeptide exit tunnel on the outside of the subunit, while an extended beta-hairpin is found that lines the wall of the exit tunnel in the center of the 70S ribosome.</text>
</comment>
<comment type="subunit">
    <text evidence="1">Part of the 50S ribosomal subunit.</text>
</comment>
<comment type="similarity">
    <text evidence="1">Belongs to the universal ribosomal protein uL22 family.</text>
</comment>